<keyword id="KW-0002">3D-structure</keyword>
<keyword id="KW-0903">Direct protein sequencing</keyword>
<keyword id="KW-1015">Disulfide bond</keyword>
<keyword id="KW-0325">Glycoprotein</keyword>
<keyword id="KW-0378">Hydrolase</keyword>
<keyword id="KW-0408">Iron</keyword>
<keyword id="KW-0479">Metal-binding</keyword>
<keyword id="KW-0964">Secreted</keyword>
<keyword id="KW-0732">Signal</keyword>
<keyword id="KW-0862">Zinc</keyword>
<protein>
    <recommendedName>
        <fullName evidence="9">Fe(3+)-Zn(2+) purple acid phosphatase</fullName>
        <shortName evidence="9">PAP</shortName>
        <ecNumber evidence="2 3">3.1.3.2</ecNumber>
    </recommendedName>
    <alternativeName>
        <fullName evidence="12">Iron(III)-zinc(II) purple acid phosphatase</fullName>
    </alternativeName>
</protein>
<comment type="catalytic activity">
    <reaction evidence="2 3">
        <text>a phosphate monoester + H2O = an alcohol + phosphate</text>
        <dbReference type="Rhea" id="RHEA:15017"/>
        <dbReference type="ChEBI" id="CHEBI:15377"/>
        <dbReference type="ChEBI" id="CHEBI:30879"/>
        <dbReference type="ChEBI" id="CHEBI:43474"/>
        <dbReference type="ChEBI" id="CHEBI:67140"/>
        <dbReference type="EC" id="3.1.3.2"/>
    </reaction>
</comment>
<comment type="cofactor">
    <cofactor>
        <name>Fe cation</name>
        <dbReference type="ChEBI" id="CHEBI:24875"/>
    </cofactor>
    <text evidence="3 4 6">Binds 1 Fe cation per subunit.</text>
</comment>
<comment type="cofactor">
    <cofactor>
        <name>Zn(2+)</name>
        <dbReference type="ChEBI" id="CHEBI:29105"/>
    </cofactor>
    <text evidence="3 4 6">Binds 1 zinc ion per subunit.</text>
</comment>
<comment type="activity regulation">
    <text evidence="2 3">Inhibited by compounds CC24201, CC27209, and MO07123 (PubMed:22943065). Inhibited by the tetraoxoanions molybdate and phosphate (PubMed:12054466). Not inhibited by EDTA or tartrate (PubMed:12054466).</text>
</comment>
<comment type="biophysicochemical properties">
    <phDependence>
        <text evidence="2">Optimum pH is 6.1.</text>
    </phDependence>
</comment>
<comment type="subunit">
    <text evidence="3 4 6">Homodimer; disulfide-linked.</text>
</comment>
<comment type="subcellular location">
    <subcellularLocation>
        <location evidence="7">Secreted</location>
    </subcellularLocation>
</comment>
<comment type="similarity">
    <text evidence="11">Belongs to the metallophosphoesterase superfamily. Purple acid phosphatase family.</text>
</comment>
<evidence type="ECO:0000255" key="1"/>
<evidence type="ECO:0000269" key="2">
    <source>
    </source>
</evidence>
<evidence type="ECO:0000269" key="3">
    <source>
    </source>
</evidence>
<evidence type="ECO:0000269" key="4">
    <source>
    </source>
</evidence>
<evidence type="ECO:0000269" key="5">
    <source>
    </source>
</evidence>
<evidence type="ECO:0000269" key="6">
    <source>
    </source>
</evidence>
<evidence type="ECO:0000303" key="7">
    <source>
    </source>
</evidence>
<evidence type="ECO:0000303" key="8">
    <source>
    </source>
</evidence>
<evidence type="ECO:0000303" key="9">
    <source>
    </source>
</evidence>
<evidence type="ECO:0000303" key="10">
    <source>
    </source>
</evidence>
<evidence type="ECO:0000305" key="11"/>
<evidence type="ECO:0000305" key="12">
    <source>
    </source>
</evidence>
<evidence type="ECO:0000312" key="13">
    <source>
        <dbReference type="EMBL" id="CAA04644.1"/>
    </source>
</evidence>
<evidence type="ECO:0007829" key="14">
    <source>
        <dbReference type="PDB" id="1KBP"/>
    </source>
</evidence>
<evidence type="ECO:0007829" key="15">
    <source>
        <dbReference type="PDB" id="2QFP"/>
    </source>
</evidence>
<evidence type="ECO:0007829" key="16">
    <source>
        <dbReference type="PDB" id="6HWR"/>
    </source>
</evidence>
<evidence type="ECO:0007829" key="17">
    <source>
        <dbReference type="PDB" id="6VJ7"/>
    </source>
</evidence>
<organism>
    <name type="scientific">Phaseolus vulgaris</name>
    <name type="common">Kidney bean</name>
    <name type="synonym">French bean</name>
    <dbReference type="NCBI Taxonomy" id="3885"/>
    <lineage>
        <taxon>Eukaryota</taxon>
        <taxon>Viridiplantae</taxon>
        <taxon>Streptophyta</taxon>
        <taxon>Embryophyta</taxon>
        <taxon>Tracheophyta</taxon>
        <taxon>Spermatophyta</taxon>
        <taxon>Magnoliopsida</taxon>
        <taxon>eudicotyledons</taxon>
        <taxon>Gunneridae</taxon>
        <taxon>Pentapetalae</taxon>
        <taxon>rosids</taxon>
        <taxon>fabids</taxon>
        <taxon>Fabales</taxon>
        <taxon>Fabaceae</taxon>
        <taxon>Papilionoideae</taxon>
        <taxon>50 kb inversion clade</taxon>
        <taxon>NPAAA clade</taxon>
        <taxon>indigoferoid/millettioid clade</taxon>
        <taxon>Phaseoleae</taxon>
        <taxon>Phaseolus</taxon>
    </lineage>
</organism>
<reference key="1">
    <citation type="journal article" date="2002" name="Arch. Biochem. Biophys.">
        <title>Heterologous expression and characterization of recombinant purple acid phosphatase from red kidney bean.</title>
        <authorList>
            <person name="Vogel A."/>
            <person name="Borchers T."/>
            <person name="Marcus K."/>
            <person name="Meyer H.E."/>
            <person name="Krebs B."/>
            <person name="Spener F."/>
        </authorList>
    </citation>
    <scope>NUCLEOTIDE SEQUENCE [MRNA]</scope>
    <scope>CATALYTIC ACTIVITY</scope>
    <scope>ACTIVITY REGULATION</scope>
    <scope>BIOPHYSICOCHEMICAL PROPERTIES</scope>
    <scope>BLOCKAGE OF N-TERMINUS</scope>
    <source>
        <tissue evidence="13">Seed</tissue>
    </source>
</reference>
<reference key="2">
    <citation type="journal article" date="1994" name="Eur. J. Biochem.">
        <title>The amino acid sequence of the red kidney bean Fe(III)-Zn(II) purple acid phosphatase. Determination of the amino acid sequence by a combination of matrix-assisted laser desorption/ionization mass spectrometry and automated Edman sequencing.</title>
        <authorList>
            <person name="Klabunde T."/>
            <person name="Stahl B."/>
            <person name="Suerbaum H."/>
            <person name="Hahner S."/>
            <person name="Karas M."/>
            <person name="Hillenkamp F."/>
            <person name="Krebs B."/>
            <person name="Witzel H."/>
        </authorList>
    </citation>
    <scope>PROTEIN SEQUENCE OF 28-459</scope>
    <source>
        <tissue evidence="9">Seed</tissue>
    </source>
</reference>
<reference key="3">
    <citation type="journal article" date="1994" name="Eur. J. Biochem.">
        <title>The oligosaccharides of the Fe(III)-Zn(II) purple acid phosphatase of the red kidney bean. Determination of the structure by a combination of matrix-assisted laser desorption/ionization mass spectrometry and selective enzymic degradation.</title>
        <authorList>
            <person name="Stahl B."/>
            <person name="Klabunde T."/>
            <person name="Witzel H."/>
            <person name="Krebs B."/>
            <person name="Steup M."/>
            <person name="Karas M."/>
            <person name="Hillenkamp F."/>
        </authorList>
    </citation>
    <scope>PARTIAL PROTEIN SEQUENCE</scope>
    <scope>GLYCOSYLATION AT ASN-108; ASN-136; ASN-170; ASN-238 AND ASN-423</scope>
    <source>
        <tissue>Seed</tissue>
    </source>
</reference>
<reference key="4">
    <citation type="journal article" date="1995" name="Science">
        <title>Crystal structure of a purple acid phosphatase containing a dinuclear Fe(III)-Zn(II) active site.</title>
        <authorList>
            <person name="Straeter N."/>
            <person name="Klabunde T."/>
            <person name="Tucker P."/>
            <person name="Witzel H."/>
            <person name="Krebs B."/>
        </authorList>
    </citation>
    <scope>X-RAY CRYSTALLOGRAPHY (2.9 ANGSTROMS)</scope>
    <scope>COFACTOR</scope>
    <scope>SUBUNIT</scope>
    <scope>ACTIVE SITE</scope>
</reference>
<reference key="5">
    <citation type="journal article" date="1996" name="J. Mol. Biol.">
        <title>Mechanism of Fe(III)-Zn(II) purple acid phosphatase based on crystal structures.</title>
        <authorList>
            <person name="Klabunde T."/>
            <person name="Straeter N."/>
            <person name="Froehlich R."/>
            <person name="Witzel H."/>
            <person name="Krebs B."/>
        </authorList>
    </citation>
    <scope>X-RAY CRYSTALLOGRAPHY (2.65 ANGSTROMS)</scope>
    <scope>COFACTOR</scope>
    <scope>SUBUNIT</scope>
    <scope>GLYCOSYLATION AT ASN-108; ASN-136; ASN-170; ASN-238 AND ASN-423</scope>
    <scope>DISULFIDE BOND</scope>
    <scope>ACTIVE SITE</scope>
</reference>
<reference key="6">
    <citation type="journal article" date="2012" name="Chem. Biol. Drug Des.">
        <title>Identification of purple acid phosphatase inhibitors by fragment-based screening: promising new leads for osteoporosis therapeutics.</title>
        <authorList>
            <person name="Feder D."/>
            <person name="Hussein W.M."/>
            <person name="Clayton D.J."/>
            <person name="Kan M.W."/>
            <person name="Schenk G."/>
            <person name="McGeary R.P."/>
            <person name="Guddat L.W."/>
        </authorList>
    </citation>
    <scope>X-RAY CRYSTALLOGRAPHY (2.30 ANGSTROMS) OF 34-459 IN COMPLEX WITH INHIBITOR</scope>
    <scope>CATALYTIC ACTIVITY</scope>
    <scope>COFACTOR</scope>
    <scope>ACTIVITY REGULATION</scope>
    <scope>SUBUNIT</scope>
    <scope>DISULFIDE BOND</scope>
    <scope>GLYCOSYLATION AT ASN-108; ASN-136; ASN-170 AND ASN-423</scope>
</reference>
<proteinExistence type="evidence at protein level"/>
<accession>P80366</accession>
<accession>O24319</accession>
<name>PPAF_PHAVU</name>
<dbReference type="EC" id="3.1.3.2" evidence="2 3"/>
<dbReference type="EMBL" id="AJ001270">
    <property type="protein sequence ID" value="CAA04644.1"/>
    <property type="molecule type" value="mRNA"/>
</dbReference>
<dbReference type="PDB" id="1KBP">
    <property type="method" value="X-ray"/>
    <property type="resolution" value="2.65 A"/>
    <property type="chains" value="A/B/C/D=28-459"/>
</dbReference>
<dbReference type="PDB" id="2QFP">
    <property type="method" value="X-ray"/>
    <property type="resolution" value="2.20 A"/>
    <property type="chains" value="A/B/C/D=36-459"/>
</dbReference>
<dbReference type="PDB" id="2QFR">
    <property type="method" value="X-ray"/>
    <property type="resolution" value="2.40 A"/>
    <property type="chains" value="A/B=36-459"/>
</dbReference>
<dbReference type="PDB" id="3KBP">
    <property type="method" value="X-ray"/>
    <property type="resolution" value="3.00 A"/>
    <property type="chains" value="A/B/C/D=28-459"/>
</dbReference>
<dbReference type="PDB" id="4DHL">
    <property type="method" value="X-ray"/>
    <property type="resolution" value="2.30 A"/>
    <property type="chains" value="A/B/C/D=34-459"/>
</dbReference>
<dbReference type="PDB" id="4DSY">
    <property type="method" value="X-ray"/>
    <property type="resolution" value="2.30 A"/>
    <property type="chains" value="A/B/C/D=34-459"/>
</dbReference>
<dbReference type="PDB" id="4DT2">
    <property type="method" value="X-ray"/>
    <property type="resolution" value="2.70 A"/>
    <property type="chains" value="A/B/C/D=34-459"/>
</dbReference>
<dbReference type="PDB" id="4KBP">
    <property type="method" value="X-ray"/>
    <property type="resolution" value="2.70 A"/>
    <property type="chains" value="A/B/C/D=28-459"/>
</dbReference>
<dbReference type="PDB" id="6G46">
    <property type="method" value="X-ray"/>
    <property type="resolution" value="2.40 A"/>
    <property type="chains" value="A/B/C/D=34-459"/>
</dbReference>
<dbReference type="PDB" id="6HWR">
    <property type="method" value="X-ray"/>
    <property type="resolution" value="1.95 A"/>
    <property type="chains" value="A/B/C/D=34-459"/>
</dbReference>
<dbReference type="PDB" id="6OF5">
    <property type="method" value="X-ray"/>
    <property type="resolution" value="2.30 A"/>
    <property type="chains" value="A/B/C/D=34-459"/>
</dbReference>
<dbReference type="PDB" id="6OFD">
    <property type="method" value="X-ray"/>
    <property type="resolution" value="2.20 A"/>
    <property type="chains" value="A/B/C/D=1-459"/>
</dbReference>
<dbReference type="PDB" id="6PY9">
    <property type="method" value="X-ray"/>
    <property type="resolution" value="2.20 A"/>
    <property type="chains" value="A/B/C/D=1-459"/>
</dbReference>
<dbReference type="PDB" id="6VJ7">
    <property type="method" value="X-ray"/>
    <property type="resolution" value="2.60 A"/>
    <property type="chains" value="A/B/C/D=34-459"/>
</dbReference>
<dbReference type="PDB" id="8BRN">
    <property type="method" value="X-ray"/>
    <property type="resolution" value="2.00 A"/>
    <property type="chains" value="A/B/C/D=32-459"/>
</dbReference>
<dbReference type="PDBsum" id="1KBP"/>
<dbReference type="PDBsum" id="2QFP"/>
<dbReference type="PDBsum" id="2QFR"/>
<dbReference type="PDBsum" id="3KBP"/>
<dbReference type="PDBsum" id="4DHL"/>
<dbReference type="PDBsum" id="4DSY"/>
<dbReference type="PDBsum" id="4DT2"/>
<dbReference type="PDBsum" id="4KBP"/>
<dbReference type="PDBsum" id="6G46"/>
<dbReference type="PDBsum" id="6HWR"/>
<dbReference type="PDBsum" id="6OF5"/>
<dbReference type="PDBsum" id="6OFD"/>
<dbReference type="PDBsum" id="6PY9"/>
<dbReference type="PDBsum" id="6VJ7"/>
<dbReference type="PDBsum" id="8BRN"/>
<dbReference type="SMR" id="P80366"/>
<dbReference type="BindingDB" id="P80366"/>
<dbReference type="ChEMBL" id="CHEMBL5670"/>
<dbReference type="GlyConnect" id="306">
    <property type="glycosylation" value="12 N-Linked glycans"/>
</dbReference>
<dbReference type="iPTMnet" id="P80366"/>
<dbReference type="eggNOG" id="KOG1378">
    <property type="taxonomic scope" value="Eukaryota"/>
</dbReference>
<dbReference type="BRENDA" id="3.1.3.2">
    <property type="organism ID" value="4746"/>
</dbReference>
<dbReference type="SABIO-RK" id="P80366"/>
<dbReference type="EvolutionaryTrace" id="P80366"/>
<dbReference type="GO" id="GO:0005576">
    <property type="term" value="C:extracellular region"/>
    <property type="evidence" value="ECO:0007669"/>
    <property type="project" value="UniProtKB-SubCell"/>
</dbReference>
<dbReference type="GO" id="GO:0003993">
    <property type="term" value="F:acid phosphatase activity"/>
    <property type="evidence" value="ECO:0000314"/>
    <property type="project" value="UniProtKB"/>
</dbReference>
<dbReference type="GO" id="GO:0008199">
    <property type="term" value="F:ferric iron binding"/>
    <property type="evidence" value="ECO:0000314"/>
    <property type="project" value="UniProtKB"/>
</dbReference>
<dbReference type="GO" id="GO:0008270">
    <property type="term" value="F:zinc ion binding"/>
    <property type="evidence" value="ECO:0000314"/>
    <property type="project" value="UniProtKB"/>
</dbReference>
<dbReference type="CDD" id="cd00839">
    <property type="entry name" value="MPP_PAPs"/>
    <property type="match status" value="1"/>
</dbReference>
<dbReference type="FunFam" id="2.60.40.380:FF:000001">
    <property type="entry name" value="Fe(3+)-Zn(2+) purple acid phosphatase"/>
    <property type="match status" value="1"/>
</dbReference>
<dbReference type="FunFam" id="3.60.21.10:FF:000034">
    <property type="entry name" value="Fe(3+)-Zn(2+) purple acid phosphatase"/>
    <property type="match status" value="1"/>
</dbReference>
<dbReference type="Gene3D" id="3.60.21.10">
    <property type="match status" value="1"/>
</dbReference>
<dbReference type="Gene3D" id="2.60.40.380">
    <property type="entry name" value="Purple acid phosphatase-like, N-terminal"/>
    <property type="match status" value="1"/>
</dbReference>
<dbReference type="InterPro" id="IPR004843">
    <property type="entry name" value="Calcineurin-like_PHP_ApaH"/>
</dbReference>
<dbReference type="InterPro" id="IPR029052">
    <property type="entry name" value="Metallo-depent_PP-like"/>
</dbReference>
<dbReference type="InterPro" id="IPR041792">
    <property type="entry name" value="MPP_PAP"/>
</dbReference>
<dbReference type="InterPro" id="IPR039331">
    <property type="entry name" value="PPA-like"/>
</dbReference>
<dbReference type="InterPro" id="IPR008963">
    <property type="entry name" value="Purple_acid_Pase-like_N"/>
</dbReference>
<dbReference type="InterPro" id="IPR015914">
    <property type="entry name" value="Purple_acid_Pase_N"/>
</dbReference>
<dbReference type="InterPro" id="IPR025733">
    <property type="entry name" value="Purple_acid_PPase_C_dom"/>
</dbReference>
<dbReference type="PANTHER" id="PTHR22953">
    <property type="entry name" value="ACID PHOSPHATASE RELATED"/>
    <property type="match status" value="1"/>
</dbReference>
<dbReference type="PANTHER" id="PTHR22953:SF86">
    <property type="entry name" value="PURPLE ACID PHOSPHATASE 10"/>
    <property type="match status" value="1"/>
</dbReference>
<dbReference type="Pfam" id="PF00149">
    <property type="entry name" value="Metallophos"/>
    <property type="match status" value="1"/>
</dbReference>
<dbReference type="Pfam" id="PF14008">
    <property type="entry name" value="Metallophos_C"/>
    <property type="match status" value="1"/>
</dbReference>
<dbReference type="Pfam" id="PF16656">
    <property type="entry name" value="Pur_ac_phosph_N"/>
    <property type="match status" value="1"/>
</dbReference>
<dbReference type="SUPFAM" id="SSF56300">
    <property type="entry name" value="Metallo-dependent phosphatases"/>
    <property type="match status" value="1"/>
</dbReference>
<dbReference type="SUPFAM" id="SSF49363">
    <property type="entry name" value="Purple acid phosphatase, N-terminal domain"/>
    <property type="match status" value="1"/>
</dbReference>
<sequence length="459" mass="52857">MGVVKGLLALALVLNVVVVSNGGKSSNFVRKTNKNRDMPLDSDVFRVPPGYNAPQQVHITQGDLVGRAMIISWVTMDEPGSSAVRYWSEKNGRKRIAKGKMSTYRFFNYSSGFIHHTTIRKLKYNTKYYYEVGLRNTTRRFSFITPPQTGLDVPYTFGLIGDLGQSFDSNTTLSHYELSPKKGQTVLFVGDLSYADRYPNHDNVRWDTWGRFTERSVAYQPWIWTAGNHEIEFAPEINETEPFKPFSYRYHVPYEASQSTSPFWYSIKRASAHIIVLSSYSAYGRGTPQYTWLKKELRKVKRSETPWLIVLMHSPLYNSYNHHFMEGEAMRTKFEAWFVKYKVDVVFAGHVHAYERSERVSNIAYKITNGLCTPVKDQSAPVYITIGDAGNYGVIDSNMIQPQPEYSAFREASFGHGMFDIKNRTHAHFSWNRNQDGVAVEADSVWFFNRHWYPVDDST</sequence>
<feature type="signal peptide" evidence="1 7">
    <location>
        <begin position="1"/>
        <end position="22"/>
    </location>
</feature>
<feature type="chain" id="PRO_0000114474" description="Fe(3+)-Zn(2+) purple acid phosphatase" evidence="1 7">
    <location>
        <begin position="23"/>
        <end position="459"/>
    </location>
</feature>
<feature type="active site" description="Proton donor" evidence="8 10">
    <location>
        <position position="323"/>
    </location>
</feature>
<feature type="binding site" evidence="3 6">
    <location>
        <position position="162"/>
    </location>
    <ligand>
        <name>Fe cation</name>
        <dbReference type="ChEBI" id="CHEBI:24875"/>
    </ligand>
</feature>
<feature type="binding site" evidence="3 6">
    <location>
        <position position="191"/>
    </location>
    <ligand>
        <name>Fe cation</name>
        <dbReference type="ChEBI" id="CHEBI:24875"/>
    </ligand>
</feature>
<feature type="binding site" evidence="3 6">
    <location>
        <position position="191"/>
    </location>
    <ligand>
        <name>Zn(2+)</name>
        <dbReference type="ChEBI" id="CHEBI:29105"/>
    </ligand>
</feature>
<feature type="binding site" evidence="3 6">
    <location>
        <position position="194"/>
    </location>
    <ligand>
        <name>Fe cation</name>
        <dbReference type="ChEBI" id="CHEBI:24875"/>
    </ligand>
</feature>
<feature type="binding site" evidence="3 6">
    <location>
        <position position="228"/>
    </location>
    <ligand>
        <name>Zn(2+)</name>
        <dbReference type="ChEBI" id="CHEBI:29105"/>
    </ligand>
</feature>
<feature type="binding site" evidence="3 6">
    <location>
        <position position="313"/>
    </location>
    <ligand>
        <name>Zn(2+)</name>
        <dbReference type="ChEBI" id="CHEBI:29105"/>
    </ligand>
</feature>
<feature type="binding site" evidence="3 6">
    <location>
        <position position="350"/>
    </location>
    <ligand>
        <name>Zn(2+)</name>
        <dbReference type="ChEBI" id="CHEBI:29105"/>
    </ligand>
</feature>
<feature type="binding site" evidence="3 6">
    <location>
        <position position="352"/>
    </location>
    <ligand>
        <name>Fe cation</name>
        <dbReference type="ChEBI" id="CHEBI:24875"/>
    </ligand>
</feature>
<feature type="modified residue" description="Blocked amino end (Gly)" evidence="2">
    <location>
        <position position="23"/>
    </location>
</feature>
<feature type="glycosylation site" description="N-linked (GlcNAc...) asparagine; partial" evidence="3 5 6">
    <location>
        <position position="108"/>
    </location>
</feature>
<feature type="glycosylation site" description="N-linked (GlcNAc...) asparagine" evidence="3 5 6">
    <location>
        <position position="136"/>
    </location>
</feature>
<feature type="glycosylation site" description="N-linked (GlcNAc...) asparagine" evidence="3 5 6">
    <location>
        <position position="170"/>
    </location>
</feature>
<feature type="glycosylation site" description="N-linked (GlcNAc...) asparagine" evidence="5 6">
    <location>
        <position position="238"/>
    </location>
</feature>
<feature type="glycosylation site" description="N-linked (GlcNAc...) asparagine" evidence="3 5 6">
    <location>
        <position position="423"/>
    </location>
</feature>
<feature type="disulfide bond" description="Interchain" evidence="3 6">
    <location>
        <position position="372"/>
    </location>
</feature>
<feature type="sequence conflict" description="In Ref. 2; AA sequence." ref="2">
    <original>YS</original>
    <variation>HI</variation>
    <location>
        <begin position="280"/>
        <end position="281"/>
    </location>
</feature>
<feature type="sequence conflict" description="In Ref. 2; AA sequence." ref="2">
    <original>N</original>
    <variation>D</variation>
    <location>
        <position position="369"/>
    </location>
</feature>
<feature type="helix" evidence="16">
    <location>
        <begin position="43"/>
        <end position="45"/>
    </location>
</feature>
<feature type="strand" evidence="16">
    <location>
        <begin position="55"/>
        <end position="61"/>
    </location>
</feature>
<feature type="strand" evidence="16">
    <location>
        <begin position="63"/>
        <end position="67"/>
    </location>
</feature>
<feature type="strand" evidence="16">
    <location>
        <begin position="69"/>
        <end position="78"/>
    </location>
</feature>
<feature type="strand" evidence="16">
    <location>
        <begin position="84"/>
        <end position="88"/>
    </location>
</feature>
<feature type="turn" evidence="16">
    <location>
        <begin position="89"/>
        <end position="91"/>
    </location>
</feature>
<feature type="strand" evidence="16">
    <location>
        <begin position="95"/>
        <end position="97"/>
    </location>
</feature>
<feature type="strand" evidence="16">
    <location>
        <begin position="100"/>
        <end position="102"/>
    </location>
</feature>
<feature type="strand" evidence="16">
    <location>
        <begin position="113"/>
        <end position="119"/>
    </location>
</feature>
<feature type="strand" evidence="16">
    <location>
        <begin position="127"/>
        <end position="132"/>
    </location>
</feature>
<feature type="strand" evidence="15">
    <location>
        <begin position="135"/>
        <end position="137"/>
    </location>
</feature>
<feature type="strand" evidence="16">
    <location>
        <begin position="139"/>
        <end position="144"/>
    </location>
</feature>
<feature type="strand" evidence="16">
    <location>
        <begin position="155"/>
        <end position="160"/>
    </location>
</feature>
<feature type="strand" evidence="17">
    <location>
        <begin position="164"/>
        <end position="166"/>
    </location>
</feature>
<feature type="helix" evidence="16">
    <location>
        <begin position="167"/>
        <end position="177"/>
    </location>
</feature>
<feature type="strand" evidence="16">
    <location>
        <begin position="184"/>
        <end position="188"/>
    </location>
</feature>
<feature type="helix" evidence="16">
    <location>
        <begin position="195"/>
        <end position="197"/>
    </location>
</feature>
<feature type="helix" evidence="16">
    <location>
        <begin position="199"/>
        <end position="201"/>
    </location>
</feature>
<feature type="helix" evidence="16">
    <location>
        <begin position="204"/>
        <end position="217"/>
    </location>
</feature>
<feature type="strand" evidence="16">
    <location>
        <begin position="222"/>
        <end position="224"/>
    </location>
</feature>
<feature type="helix" evidence="16">
    <location>
        <begin position="228"/>
        <end position="231"/>
    </location>
</feature>
<feature type="helix" evidence="16">
    <location>
        <begin position="235"/>
        <end position="237"/>
    </location>
</feature>
<feature type="helix" evidence="16">
    <location>
        <begin position="244"/>
        <end position="249"/>
    </location>
</feature>
<feature type="helix" evidence="16">
    <location>
        <begin position="254"/>
        <end position="257"/>
    </location>
</feature>
<feature type="strand" evidence="16">
    <location>
        <begin position="264"/>
        <end position="269"/>
    </location>
</feature>
<feature type="strand" evidence="16">
    <location>
        <begin position="272"/>
        <end position="276"/>
    </location>
</feature>
<feature type="helix" evidence="16">
    <location>
        <begin position="288"/>
        <end position="299"/>
    </location>
</feature>
<feature type="turn" evidence="16">
    <location>
        <begin position="302"/>
        <end position="304"/>
    </location>
</feature>
<feature type="strand" evidence="16">
    <location>
        <begin position="307"/>
        <end position="311"/>
    </location>
</feature>
<feature type="turn" evidence="16">
    <location>
        <begin position="322"/>
        <end position="327"/>
    </location>
</feature>
<feature type="helix" evidence="16">
    <location>
        <begin position="328"/>
        <end position="340"/>
    </location>
</feature>
<feature type="strand" evidence="16">
    <location>
        <begin position="345"/>
        <end position="348"/>
    </location>
</feature>
<feature type="strand" evidence="16">
    <location>
        <begin position="350"/>
        <end position="357"/>
    </location>
</feature>
<feature type="strand" evidence="16">
    <location>
        <begin position="359"/>
        <end position="361"/>
    </location>
</feature>
<feature type="strand" evidence="16">
    <location>
        <begin position="367"/>
        <end position="369"/>
    </location>
</feature>
<feature type="strand" evidence="16">
    <location>
        <begin position="382"/>
        <end position="386"/>
    </location>
</feature>
<feature type="turn" evidence="14">
    <location>
        <begin position="391"/>
        <end position="393"/>
    </location>
</feature>
<feature type="strand" evidence="16">
    <location>
        <begin position="407"/>
        <end position="411"/>
    </location>
</feature>
<feature type="strand" evidence="16">
    <location>
        <begin position="415"/>
        <end position="421"/>
    </location>
</feature>
<feature type="strand" evidence="16">
    <location>
        <begin position="423"/>
        <end position="433"/>
    </location>
</feature>
<feature type="strand" evidence="16">
    <location>
        <begin position="442"/>
        <end position="448"/>
    </location>
</feature>
<feature type="turn" evidence="16">
    <location>
        <begin position="450"/>
        <end position="452"/>
    </location>
</feature>